<dbReference type="EMBL" id="CP000948">
    <property type="protein sequence ID" value="ACB04370.1"/>
    <property type="molecule type" value="Genomic_DNA"/>
</dbReference>
<dbReference type="RefSeq" id="WP_001096200.1">
    <property type="nucleotide sequence ID" value="NC_010473.1"/>
</dbReference>
<dbReference type="SMR" id="B1X6G0"/>
<dbReference type="GeneID" id="93778679"/>
<dbReference type="KEGG" id="ecd:ECDH10B_3483"/>
<dbReference type="HOGENOM" id="CLU_061015_2_1_6"/>
<dbReference type="GO" id="GO:1990904">
    <property type="term" value="C:ribonucleoprotein complex"/>
    <property type="evidence" value="ECO:0007669"/>
    <property type="project" value="UniProtKB-KW"/>
</dbReference>
<dbReference type="GO" id="GO:0005840">
    <property type="term" value="C:ribosome"/>
    <property type="evidence" value="ECO:0007669"/>
    <property type="project" value="UniProtKB-KW"/>
</dbReference>
<dbReference type="GO" id="GO:0019843">
    <property type="term" value="F:rRNA binding"/>
    <property type="evidence" value="ECO:0007669"/>
    <property type="project" value="UniProtKB-UniRule"/>
</dbReference>
<dbReference type="GO" id="GO:0003735">
    <property type="term" value="F:structural constituent of ribosome"/>
    <property type="evidence" value="ECO:0007669"/>
    <property type="project" value="InterPro"/>
</dbReference>
<dbReference type="GO" id="GO:0000049">
    <property type="term" value="F:tRNA binding"/>
    <property type="evidence" value="ECO:0007669"/>
    <property type="project" value="UniProtKB-UniRule"/>
</dbReference>
<dbReference type="GO" id="GO:0006412">
    <property type="term" value="P:translation"/>
    <property type="evidence" value="ECO:0007669"/>
    <property type="project" value="UniProtKB-UniRule"/>
</dbReference>
<dbReference type="FunFam" id="3.30.1440.10:FF:000001">
    <property type="entry name" value="50S ribosomal protein L5"/>
    <property type="match status" value="1"/>
</dbReference>
<dbReference type="Gene3D" id="3.30.1440.10">
    <property type="match status" value="1"/>
</dbReference>
<dbReference type="HAMAP" id="MF_01333_B">
    <property type="entry name" value="Ribosomal_uL5_B"/>
    <property type="match status" value="1"/>
</dbReference>
<dbReference type="InterPro" id="IPR002132">
    <property type="entry name" value="Ribosomal_uL5"/>
</dbReference>
<dbReference type="InterPro" id="IPR020930">
    <property type="entry name" value="Ribosomal_uL5_bac-type"/>
</dbReference>
<dbReference type="InterPro" id="IPR031309">
    <property type="entry name" value="Ribosomal_uL5_C"/>
</dbReference>
<dbReference type="InterPro" id="IPR020929">
    <property type="entry name" value="Ribosomal_uL5_CS"/>
</dbReference>
<dbReference type="InterPro" id="IPR022803">
    <property type="entry name" value="Ribosomal_uL5_dom_sf"/>
</dbReference>
<dbReference type="InterPro" id="IPR031310">
    <property type="entry name" value="Ribosomal_uL5_N"/>
</dbReference>
<dbReference type="NCBIfam" id="NF000585">
    <property type="entry name" value="PRK00010.1"/>
    <property type="match status" value="1"/>
</dbReference>
<dbReference type="PANTHER" id="PTHR11994">
    <property type="entry name" value="60S RIBOSOMAL PROTEIN L11-RELATED"/>
    <property type="match status" value="1"/>
</dbReference>
<dbReference type="Pfam" id="PF00281">
    <property type="entry name" value="Ribosomal_L5"/>
    <property type="match status" value="1"/>
</dbReference>
<dbReference type="Pfam" id="PF00673">
    <property type="entry name" value="Ribosomal_L5_C"/>
    <property type="match status" value="1"/>
</dbReference>
<dbReference type="PIRSF" id="PIRSF002161">
    <property type="entry name" value="Ribosomal_L5"/>
    <property type="match status" value="1"/>
</dbReference>
<dbReference type="SUPFAM" id="SSF55282">
    <property type="entry name" value="RL5-like"/>
    <property type="match status" value="1"/>
</dbReference>
<dbReference type="PROSITE" id="PS00358">
    <property type="entry name" value="RIBOSOMAL_L5"/>
    <property type="match status" value="1"/>
</dbReference>
<name>RL5_ECODH</name>
<reference key="1">
    <citation type="journal article" date="2008" name="J. Bacteriol.">
        <title>The complete genome sequence of Escherichia coli DH10B: insights into the biology of a laboratory workhorse.</title>
        <authorList>
            <person name="Durfee T."/>
            <person name="Nelson R."/>
            <person name="Baldwin S."/>
            <person name="Plunkett G. III"/>
            <person name="Burland V."/>
            <person name="Mau B."/>
            <person name="Petrosino J.F."/>
            <person name="Qin X."/>
            <person name="Muzny D.M."/>
            <person name="Ayele M."/>
            <person name="Gibbs R.A."/>
            <person name="Csorgo B."/>
            <person name="Posfai G."/>
            <person name="Weinstock G.M."/>
            <person name="Blattner F.R."/>
        </authorList>
    </citation>
    <scope>NUCLEOTIDE SEQUENCE [LARGE SCALE GENOMIC DNA]</scope>
    <source>
        <strain>K12 / DH10B</strain>
    </source>
</reference>
<feature type="chain" id="PRO_1000142397" description="Large ribosomal subunit protein uL5">
    <location>
        <begin position="1"/>
        <end position="179"/>
    </location>
</feature>
<feature type="modified residue" description="N6-acetyllysine" evidence="1">
    <location>
        <position position="3"/>
    </location>
</feature>
<proteinExistence type="inferred from homology"/>
<comment type="function">
    <text evidence="1">This is one of the proteins that bind and probably mediate the attachment of the 5S RNA into the large ribosomal subunit, where it forms part of the central protuberance. In the 70S ribosome it contacts protein S13 of the 30S subunit (bridge B1b), connecting the 2 subunits; this bridge is implicated in subunit movement. Contacts the P site tRNA; the 5S rRNA and some of its associated proteins might help stabilize positioning of ribosome-bound tRNAs.</text>
</comment>
<comment type="subunit">
    <text evidence="1">Part of the 50S ribosomal subunit; part of the 5S rRNA/L5/L18/L25 subcomplex. Contacts the 5S rRNA and the P site tRNA. Forms a bridge to the 30S subunit in the 70S ribosome.</text>
</comment>
<comment type="similarity">
    <text evidence="1">Belongs to the universal ribosomal protein uL5 family.</text>
</comment>
<gene>
    <name evidence="1" type="primary">rplE</name>
    <name type="ordered locus">ECDH10B_3483</name>
</gene>
<keyword id="KW-0007">Acetylation</keyword>
<keyword id="KW-0687">Ribonucleoprotein</keyword>
<keyword id="KW-0689">Ribosomal protein</keyword>
<keyword id="KW-0694">RNA-binding</keyword>
<keyword id="KW-0699">rRNA-binding</keyword>
<keyword id="KW-0820">tRNA-binding</keyword>
<accession>B1X6G0</accession>
<evidence type="ECO:0000255" key="1">
    <source>
        <dbReference type="HAMAP-Rule" id="MF_01333"/>
    </source>
</evidence>
<evidence type="ECO:0000305" key="2"/>
<organism>
    <name type="scientific">Escherichia coli (strain K12 / DH10B)</name>
    <dbReference type="NCBI Taxonomy" id="316385"/>
    <lineage>
        <taxon>Bacteria</taxon>
        <taxon>Pseudomonadati</taxon>
        <taxon>Pseudomonadota</taxon>
        <taxon>Gammaproteobacteria</taxon>
        <taxon>Enterobacterales</taxon>
        <taxon>Enterobacteriaceae</taxon>
        <taxon>Escherichia</taxon>
    </lineage>
</organism>
<protein>
    <recommendedName>
        <fullName evidence="1">Large ribosomal subunit protein uL5</fullName>
    </recommendedName>
    <alternativeName>
        <fullName evidence="2">50S ribosomal protein L5</fullName>
    </alternativeName>
</protein>
<sequence length="179" mass="20302">MAKLHDYYKDEVVKKLMTEFNYNSVMQVPRVEKITLNMGVGEAIADKKLLDNAAADLAAISGQKPLITKARKSVAGFKIRQGYPIGCKVTLRGERMWEFFERLITIAVPRIRDFRGLSAKSFDGRGNYSMGVREQIIFPEIDYDKVDRVRGLDITITTTAKSDEEGRALLAAFDFPFRK</sequence>